<reference key="1">
    <citation type="journal article" date="2003" name="Nucleic Acids Res.">
        <title>Genome sequence of Chlamydophila caviae (Chlamydia psittaci GPIC): examining the role of niche-specific genes in the evolution of the Chlamydiaceae.</title>
        <authorList>
            <person name="Read T.D."/>
            <person name="Myers G.S.A."/>
            <person name="Brunham R.C."/>
            <person name="Nelson W.C."/>
            <person name="Paulsen I.T."/>
            <person name="Heidelberg J.F."/>
            <person name="Holtzapple E.K."/>
            <person name="Khouri H.M."/>
            <person name="Federova N.B."/>
            <person name="Carty H.A."/>
            <person name="Umayam L.A."/>
            <person name="Haft D.H."/>
            <person name="Peterson J.D."/>
            <person name="Beanan M.J."/>
            <person name="White O."/>
            <person name="Salzberg S.L."/>
            <person name="Hsia R.-C."/>
            <person name="McClarty G."/>
            <person name="Rank R.G."/>
            <person name="Bavoil P.M."/>
            <person name="Fraser C.M."/>
        </authorList>
    </citation>
    <scope>NUCLEOTIDE SEQUENCE [LARGE SCALE GENOMIC DNA]</scope>
    <source>
        <strain>ATCC VR-813 / DSM 19441 / 03DC25 / GPIC</strain>
    </source>
</reference>
<comment type="function">
    <text evidence="1">Involved in peptide bond synthesis. Stimulates efficient translation and peptide-bond synthesis on native or reconstituted 70S ribosomes in vitro. Probably functions indirectly by altering the affinity of the ribosome for aminoacyl-tRNA, thus increasing their reactivity as acceptors for peptidyl transferase (By similarity).</text>
</comment>
<comment type="pathway">
    <text>Protein biosynthesis; polypeptide chain elongation.</text>
</comment>
<comment type="subcellular location">
    <subcellularLocation>
        <location evidence="1">Cytoplasm</location>
    </subcellularLocation>
</comment>
<comment type="similarity">
    <text evidence="2">Belongs to the elongation factor P family.</text>
</comment>
<sequence>MVRVSTSEFRVGLRIEIDGQPYLILQNDFVKPGKGQAFNRIKVKNFLTGRVIERTFKSGESVETADVREQQMRFLYSDQEGATFMDDETFEQEMIFWDKIENIRQWLLEDTIYTLVLYNGNVIGVEPPIFMELTIAETAPGVRGDTASGRVLKPAVTNTGAKIMVPIFIEEGEVVKIDTRTGSYESRVSK</sequence>
<name>EFP2_CHLCV</name>
<protein>
    <recommendedName>
        <fullName>Elongation factor P 2</fullName>
        <shortName>EF-P 2</shortName>
    </recommendedName>
</protein>
<keyword id="KW-0963">Cytoplasm</keyword>
<keyword id="KW-0251">Elongation factor</keyword>
<keyword id="KW-0648">Protein biosynthesis</keyword>
<evidence type="ECO:0000250" key="1"/>
<evidence type="ECO:0000305" key="2"/>
<feature type="chain" id="PRO_0000094226" description="Elongation factor P 2">
    <location>
        <begin position="1"/>
        <end position="190"/>
    </location>
</feature>
<proteinExistence type="inferred from homology"/>
<accession>Q821R5</accession>
<gene>
    <name type="primary">efp2</name>
    <name type="ordered locus">CCA_00873</name>
</gene>
<dbReference type="EMBL" id="AE015925">
    <property type="protein sequence ID" value="AAP05614.1"/>
    <property type="molecule type" value="Genomic_DNA"/>
</dbReference>
<dbReference type="RefSeq" id="WP_011006828.1">
    <property type="nucleotide sequence ID" value="NC_003361.3"/>
</dbReference>
<dbReference type="SMR" id="Q821R5"/>
<dbReference type="STRING" id="227941.CCA_00873"/>
<dbReference type="KEGG" id="cca:CCA_00873"/>
<dbReference type="eggNOG" id="COG0231">
    <property type="taxonomic scope" value="Bacteria"/>
</dbReference>
<dbReference type="HOGENOM" id="CLU_074944_0_0_0"/>
<dbReference type="OrthoDB" id="9801844at2"/>
<dbReference type="UniPathway" id="UPA00345"/>
<dbReference type="Proteomes" id="UP000002193">
    <property type="component" value="Chromosome"/>
</dbReference>
<dbReference type="GO" id="GO:0005737">
    <property type="term" value="C:cytoplasm"/>
    <property type="evidence" value="ECO:0007669"/>
    <property type="project" value="UniProtKB-SubCell"/>
</dbReference>
<dbReference type="GO" id="GO:0003746">
    <property type="term" value="F:translation elongation factor activity"/>
    <property type="evidence" value="ECO:0007669"/>
    <property type="project" value="UniProtKB-UniRule"/>
</dbReference>
<dbReference type="GO" id="GO:0043043">
    <property type="term" value="P:peptide biosynthetic process"/>
    <property type="evidence" value="ECO:0007669"/>
    <property type="project" value="InterPro"/>
</dbReference>
<dbReference type="CDD" id="cd04470">
    <property type="entry name" value="S1_EF-P_repeat_1"/>
    <property type="match status" value="1"/>
</dbReference>
<dbReference type="CDD" id="cd05794">
    <property type="entry name" value="S1_EF-P_repeat_2"/>
    <property type="match status" value="1"/>
</dbReference>
<dbReference type="FunFam" id="2.30.30.30:FF:000003">
    <property type="entry name" value="Elongation factor P"/>
    <property type="match status" value="1"/>
</dbReference>
<dbReference type="FunFam" id="2.40.50.140:FF:000004">
    <property type="entry name" value="Elongation factor P"/>
    <property type="match status" value="1"/>
</dbReference>
<dbReference type="FunFam" id="2.40.50.140:FF:000009">
    <property type="entry name" value="Elongation factor P"/>
    <property type="match status" value="1"/>
</dbReference>
<dbReference type="Gene3D" id="2.30.30.30">
    <property type="match status" value="1"/>
</dbReference>
<dbReference type="Gene3D" id="2.40.50.140">
    <property type="entry name" value="Nucleic acid-binding proteins"/>
    <property type="match status" value="2"/>
</dbReference>
<dbReference type="HAMAP" id="MF_00141">
    <property type="entry name" value="EF_P"/>
    <property type="match status" value="1"/>
</dbReference>
<dbReference type="InterPro" id="IPR015365">
    <property type="entry name" value="Elong-fact-P_C"/>
</dbReference>
<dbReference type="InterPro" id="IPR012340">
    <property type="entry name" value="NA-bd_OB-fold"/>
</dbReference>
<dbReference type="InterPro" id="IPR014722">
    <property type="entry name" value="Rib_uL2_dom2"/>
</dbReference>
<dbReference type="InterPro" id="IPR020599">
    <property type="entry name" value="Transl_elong_fac_P/YeiP"/>
</dbReference>
<dbReference type="InterPro" id="IPR013185">
    <property type="entry name" value="Transl_elong_KOW-like"/>
</dbReference>
<dbReference type="InterPro" id="IPR001059">
    <property type="entry name" value="Transl_elong_P/YeiP_cen"/>
</dbReference>
<dbReference type="InterPro" id="IPR013852">
    <property type="entry name" value="Transl_elong_P/YeiP_CS"/>
</dbReference>
<dbReference type="InterPro" id="IPR011768">
    <property type="entry name" value="Transl_elongation_fac_P"/>
</dbReference>
<dbReference type="InterPro" id="IPR008991">
    <property type="entry name" value="Translation_prot_SH3-like_sf"/>
</dbReference>
<dbReference type="NCBIfam" id="TIGR00038">
    <property type="entry name" value="efp"/>
    <property type="match status" value="1"/>
</dbReference>
<dbReference type="NCBIfam" id="NF001810">
    <property type="entry name" value="PRK00529.1"/>
    <property type="match status" value="1"/>
</dbReference>
<dbReference type="PANTHER" id="PTHR30053">
    <property type="entry name" value="ELONGATION FACTOR P"/>
    <property type="match status" value="1"/>
</dbReference>
<dbReference type="PANTHER" id="PTHR30053:SF12">
    <property type="entry name" value="ELONGATION FACTOR P (EF-P) FAMILY PROTEIN"/>
    <property type="match status" value="1"/>
</dbReference>
<dbReference type="Pfam" id="PF01132">
    <property type="entry name" value="EFP"/>
    <property type="match status" value="1"/>
</dbReference>
<dbReference type="Pfam" id="PF08207">
    <property type="entry name" value="EFP_N"/>
    <property type="match status" value="1"/>
</dbReference>
<dbReference type="Pfam" id="PF09285">
    <property type="entry name" value="Elong-fact-P_C"/>
    <property type="match status" value="1"/>
</dbReference>
<dbReference type="PIRSF" id="PIRSF005901">
    <property type="entry name" value="EF-P"/>
    <property type="match status" value="1"/>
</dbReference>
<dbReference type="SMART" id="SM01185">
    <property type="entry name" value="EFP"/>
    <property type="match status" value="1"/>
</dbReference>
<dbReference type="SMART" id="SM00841">
    <property type="entry name" value="Elong-fact-P_C"/>
    <property type="match status" value="1"/>
</dbReference>
<dbReference type="SUPFAM" id="SSF50249">
    <property type="entry name" value="Nucleic acid-binding proteins"/>
    <property type="match status" value="2"/>
</dbReference>
<dbReference type="SUPFAM" id="SSF50104">
    <property type="entry name" value="Translation proteins SH3-like domain"/>
    <property type="match status" value="1"/>
</dbReference>
<dbReference type="PROSITE" id="PS01275">
    <property type="entry name" value="EFP"/>
    <property type="match status" value="1"/>
</dbReference>
<organism>
    <name type="scientific">Chlamydia caviae (strain ATCC VR-813 / DSM 19441 / 03DC25 / GPIC)</name>
    <name type="common">Chlamydophila caviae</name>
    <dbReference type="NCBI Taxonomy" id="227941"/>
    <lineage>
        <taxon>Bacteria</taxon>
        <taxon>Pseudomonadati</taxon>
        <taxon>Chlamydiota</taxon>
        <taxon>Chlamydiia</taxon>
        <taxon>Chlamydiales</taxon>
        <taxon>Chlamydiaceae</taxon>
        <taxon>Chlamydia/Chlamydophila group</taxon>
        <taxon>Chlamydia</taxon>
    </lineage>
</organism>